<evidence type="ECO:0000255" key="1">
    <source>
        <dbReference type="HAMAP-Rule" id="MF_01326"/>
    </source>
</evidence>
<evidence type="ECO:0000305" key="2"/>
<name>RL24_ECTM1</name>
<proteinExistence type="inferred from homology"/>
<accession>A4XZ79</accession>
<keyword id="KW-0687">Ribonucleoprotein</keyword>
<keyword id="KW-0689">Ribosomal protein</keyword>
<keyword id="KW-0694">RNA-binding</keyword>
<keyword id="KW-0699">rRNA-binding</keyword>
<sequence length="104" mass="11357">MQKIRRDDEIIVIAGKDKGKRGKVLKVLADDRLVVGGINLVKRHTKPNPMSGVQGGIVEKEAPLHASNVAIFNSETNKADRVGFKIEDGKKIRVFKSTQKPVGA</sequence>
<gene>
    <name evidence="1" type="primary">rplX</name>
    <name type="ordered locus">Pmen_3898</name>
</gene>
<reference key="1">
    <citation type="submission" date="2007-04" db="EMBL/GenBank/DDBJ databases">
        <title>Complete sequence of Pseudomonas mendocina ymp.</title>
        <authorList>
            <consortium name="US DOE Joint Genome Institute"/>
            <person name="Copeland A."/>
            <person name="Lucas S."/>
            <person name="Lapidus A."/>
            <person name="Barry K."/>
            <person name="Glavina del Rio T."/>
            <person name="Dalin E."/>
            <person name="Tice H."/>
            <person name="Pitluck S."/>
            <person name="Kiss H."/>
            <person name="Brettin T."/>
            <person name="Detter J.C."/>
            <person name="Bruce D."/>
            <person name="Han C."/>
            <person name="Schmutz J."/>
            <person name="Larimer F."/>
            <person name="Land M."/>
            <person name="Hauser L."/>
            <person name="Kyrpides N."/>
            <person name="Mikhailova N."/>
            <person name="Hersman L."/>
            <person name="Dubois J."/>
            <person name="Maurice P."/>
            <person name="Richardson P."/>
        </authorList>
    </citation>
    <scope>NUCLEOTIDE SEQUENCE [LARGE SCALE GENOMIC DNA]</scope>
    <source>
        <strain>ymp</strain>
    </source>
</reference>
<comment type="function">
    <text evidence="1">One of two assembly initiator proteins, it binds directly to the 5'-end of the 23S rRNA, where it nucleates assembly of the 50S subunit.</text>
</comment>
<comment type="function">
    <text evidence="1">One of the proteins that surrounds the polypeptide exit tunnel on the outside of the subunit.</text>
</comment>
<comment type="subunit">
    <text evidence="1">Part of the 50S ribosomal subunit.</text>
</comment>
<comment type="similarity">
    <text evidence="1">Belongs to the universal ribosomal protein uL24 family.</text>
</comment>
<organism>
    <name type="scientific">Ectopseudomonas mendocina (strain ymp)</name>
    <name type="common">Pseudomonas mendocina</name>
    <dbReference type="NCBI Taxonomy" id="399739"/>
    <lineage>
        <taxon>Bacteria</taxon>
        <taxon>Pseudomonadati</taxon>
        <taxon>Pseudomonadota</taxon>
        <taxon>Gammaproteobacteria</taxon>
        <taxon>Pseudomonadales</taxon>
        <taxon>Pseudomonadaceae</taxon>
        <taxon>Ectopseudomonas</taxon>
    </lineage>
</organism>
<protein>
    <recommendedName>
        <fullName evidence="1">Large ribosomal subunit protein uL24</fullName>
    </recommendedName>
    <alternativeName>
        <fullName evidence="2">50S ribosomal protein L24</fullName>
    </alternativeName>
</protein>
<feature type="chain" id="PRO_1000052280" description="Large ribosomal subunit protein uL24">
    <location>
        <begin position="1"/>
        <end position="104"/>
    </location>
</feature>
<dbReference type="EMBL" id="CP000680">
    <property type="protein sequence ID" value="ABP86645.1"/>
    <property type="molecule type" value="Genomic_DNA"/>
</dbReference>
<dbReference type="SMR" id="A4XZ79"/>
<dbReference type="STRING" id="399739.Pmen_3898"/>
<dbReference type="KEGG" id="pmy:Pmen_3898"/>
<dbReference type="eggNOG" id="COG0198">
    <property type="taxonomic scope" value="Bacteria"/>
</dbReference>
<dbReference type="HOGENOM" id="CLU_093315_2_2_6"/>
<dbReference type="OrthoDB" id="9807419at2"/>
<dbReference type="GO" id="GO:1990904">
    <property type="term" value="C:ribonucleoprotein complex"/>
    <property type="evidence" value="ECO:0007669"/>
    <property type="project" value="UniProtKB-KW"/>
</dbReference>
<dbReference type="GO" id="GO:0005840">
    <property type="term" value="C:ribosome"/>
    <property type="evidence" value="ECO:0007669"/>
    <property type="project" value="UniProtKB-KW"/>
</dbReference>
<dbReference type="GO" id="GO:0019843">
    <property type="term" value="F:rRNA binding"/>
    <property type="evidence" value="ECO:0007669"/>
    <property type="project" value="UniProtKB-UniRule"/>
</dbReference>
<dbReference type="GO" id="GO:0003735">
    <property type="term" value="F:structural constituent of ribosome"/>
    <property type="evidence" value="ECO:0007669"/>
    <property type="project" value="InterPro"/>
</dbReference>
<dbReference type="GO" id="GO:0006412">
    <property type="term" value="P:translation"/>
    <property type="evidence" value="ECO:0007669"/>
    <property type="project" value="UniProtKB-UniRule"/>
</dbReference>
<dbReference type="CDD" id="cd06089">
    <property type="entry name" value="KOW_RPL26"/>
    <property type="match status" value="1"/>
</dbReference>
<dbReference type="FunFam" id="2.30.30.30:FF:000004">
    <property type="entry name" value="50S ribosomal protein L24"/>
    <property type="match status" value="1"/>
</dbReference>
<dbReference type="Gene3D" id="2.30.30.30">
    <property type="match status" value="1"/>
</dbReference>
<dbReference type="HAMAP" id="MF_01326_B">
    <property type="entry name" value="Ribosomal_uL24_B"/>
    <property type="match status" value="1"/>
</dbReference>
<dbReference type="InterPro" id="IPR005824">
    <property type="entry name" value="KOW"/>
</dbReference>
<dbReference type="InterPro" id="IPR014722">
    <property type="entry name" value="Rib_uL2_dom2"/>
</dbReference>
<dbReference type="InterPro" id="IPR003256">
    <property type="entry name" value="Ribosomal_uL24"/>
</dbReference>
<dbReference type="InterPro" id="IPR005825">
    <property type="entry name" value="Ribosomal_uL24_CS"/>
</dbReference>
<dbReference type="InterPro" id="IPR041988">
    <property type="entry name" value="Ribosomal_uL24_KOW"/>
</dbReference>
<dbReference type="InterPro" id="IPR008991">
    <property type="entry name" value="Translation_prot_SH3-like_sf"/>
</dbReference>
<dbReference type="NCBIfam" id="TIGR01079">
    <property type="entry name" value="rplX_bact"/>
    <property type="match status" value="1"/>
</dbReference>
<dbReference type="PANTHER" id="PTHR12903">
    <property type="entry name" value="MITOCHONDRIAL RIBOSOMAL PROTEIN L24"/>
    <property type="match status" value="1"/>
</dbReference>
<dbReference type="Pfam" id="PF00467">
    <property type="entry name" value="KOW"/>
    <property type="match status" value="1"/>
</dbReference>
<dbReference type="Pfam" id="PF17136">
    <property type="entry name" value="ribosomal_L24"/>
    <property type="match status" value="1"/>
</dbReference>
<dbReference type="SMART" id="SM00739">
    <property type="entry name" value="KOW"/>
    <property type="match status" value="1"/>
</dbReference>
<dbReference type="SUPFAM" id="SSF50104">
    <property type="entry name" value="Translation proteins SH3-like domain"/>
    <property type="match status" value="1"/>
</dbReference>
<dbReference type="PROSITE" id="PS01108">
    <property type="entry name" value="RIBOSOMAL_L24"/>
    <property type="match status" value="1"/>
</dbReference>